<proteinExistence type="inferred from homology"/>
<sequence>MKIILLGAPGAGKGTQSTSIAEHFGLQRISTGDMLRNAAKEGKPLGLEAKKIMDAGQLVSDDIIMALIKECLSKDECSCGVLFDGFPRTIGQAEALRAEEIHIDHVVEIYVQDEEIVKRMSGRRVHLASGRSYHVMFNPPKQEGLDDATGEPLVQRADDSEETVKKRLQIYHAQTAPLVEYYTMLEQKGESNAPRYHKIEGVGTVEEIRNRIFAALES</sequence>
<keyword id="KW-0067">ATP-binding</keyword>
<keyword id="KW-0963">Cytoplasm</keyword>
<keyword id="KW-0418">Kinase</keyword>
<keyword id="KW-0545">Nucleotide biosynthesis</keyword>
<keyword id="KW-0547">Nucleotide-binding</keyword>
<keyword id="KW-0808">Transferase</keyword>
<dbReference type="EC" id="2.7.4.3" evidence="1"/>
<dbReference type="EMBL" id="CP000108">
    <property type="protein sequence ID" value="ABB28093.1"/>
    <property type="molecule type" value="Genomic_DNA"/>
</dbReference>
<dbReference type="SMR" id="Q3ASD2"/>
<dbReference type="STRING" id="340177.Cag_0827"/>
<dbReference type="KEGG" id="cch:Cag_0827"/>
<dbReference type="eggNOG" id="COG0563">
    <property type="taxonomic scope" value="Bacteria"/>
</dbReference>
<dbReference type="HOGENOM" id="CLU_032354_1_2_10"/>
<dbReference type="OrthoDB" id="9805030at2"/>
<dbReference type="UniPathway" id="UPA00588">
    <property type="reaction ID" value="UER00649"/>
</dbReference>
<dbReference type="GO" id="GO:0005737">
    <property type="term" value="C:cytoplasm"/>
    <property type="evidence" value="ECO:0007669"/>
    <property type="project" value="UniProtKB-SubCell"/>
</dbReference>
<dbReference type="GO" id="GO:0004017">
    <property type="term" value="F:adenylate kinase activity"/>
    <property type="evidence" value="ECO:0007669"/>
    <property type="project" value="UniProtKB-UniRule"/>
</dbReference>
<dbReference type="GO" id="GO:0005524">
    <property type="term" value="F:ATP binding"/>
    <property type="evidence" value="ECO:0007669"/>
    <property type="project" value="UniProtKB-UniRule"/>
</dbReference>
<dbReference type="GO" id="GO:0044209">
    <property type="term" value="P:AMP salvage"/>
    <property type="evidence" value="ECO:0007669"/>
    <property type="project" value="UniProtKB-UniRule"/>
</dbReference>
<dbReference type="CDD" id="cd01428">
    <property type="entry name" value="ADK"/>
    <property type="match status" value="1"/>
</dbReference>
<dbReference type="FunFam" id="3.40.50.300:FF:000106">
    <property type="entry name" value="Adenylate kinase mitochondrial"/>
    <property type="match status" value="1"/>
</dbReference>
<dbReference type="Gene3D" id="3.40.50.300">
    <property type="entry name" value="P-loop containing nucleotide triphosphate hydrolases"/>
    <property type="match status" value="1"/>
</dbReference>
<dbReference type="HAMAP" id="MF_00235">
    <property type="entry name" value="Adenylate_kinase_Adk"/>
    <property type="match status" value="1"/>
</dbReference>
<dbReference type="InterPro" id="IPR006259">
    <property type="entry name" value="Adenyl_kin_sub"/>
</dbReference>
<dbReference type="InterPro" id="IPR000850">
    <property type="entry name" value="Adenylat/UMP-CMP_kin"/>
</dbReference>
<dbReference type="InterPro" id="IPR033690">
    <property type="entry name" value="Adenylat_kinase_CS"/>
</dbReference>
<dbReference type="InterPro" id="IPR007862">
    <property type="entry name" value="Adenylate_kinase_lid-dom"/>
</dbReference>
<dbReference type="InterPro" id="IPR027417">
    <property type="entry name" value="P-loop_NTPase"/>
</dbReference>
<dbReference type="NCBIfam" id="TIGR01351">
    <property type="entry name" value="adk"/>
    <property type="match status" value="1"/>
</dbReference>
<dbReference type="NCBIfam" id="NF001379">
    <property type="entry name" value="PRK00279.1-1"/>
    <property type="match status" value="1"/>
</dbReference>
<dbReference type="NCBIfam" id="NF001381">
    <property type="entry name" value="PRK00279.1-3"/>
    <property type="match status" value="1"/>
</dbReference>
<dbReference type="NCBIfam" id="NF011100">
    <property type="entry name" value="PRK14527.1"/>
    <property type="match status" value="1"/>
</dbReference>
<dbReference type="PANTHER" id="PTHR23359">
    <property type="entry name" value="NUCLEOTIDE KINASE"/>
    <property type="match status" value="1"/>
</dbReference>
<dbReference type="Pfam" id="PF00406">
    <property type="entry name" value="ADK"/>
    <property type="match status" value="1"/>
</dbReference>
<dbReference type="Pfam" id="PF05191">
    <property type="entry name" value="ADK_lid"/>
    <property type="match status" value="1"/>
</dbReference>
<dbReference type="PRINTS" id="PR00094">
    <property type="entry name" value="ADENYLTKNASE"/>
</dbReference>
<dbReference type="SUPFAM" id="SSF52540">
    <property type="entry name" value="P-loop containing nucleoside triphosphate hydrolases"/>
    <property type="match status" value="1"/>
</dbReference>
<dbReference type="PROSITE" id="PS00113">
    <property type="entry name" value="ADENYLATE_KINASE"/>
    <property type="match status" value="1"/>
</dbReference>
<organism>
    <name type="scientific">Chlorobium chlorochromatii (strain CaD3)</name>
    <dbReference type="NCBI Taxonomy" id="340177"/>
    <lineage>
        <taxon>Bacteria</taxon>
        <taxon>Pseudomonadati</taxon>
        <taxon>Chlorobiota</taxon>
        <taxon>Chlorobiia</taxon>
        <taxon>Chlorobiales</taxon>
        <taxon>Chlorobiaceae</taxon>
        <taxon>Chlorobium/Pelodictyon group</taxon>
        <taxon>Chlorobium</taxon>
    </lineage>
</organism>
<gene>
    <name evidence="1" type="primary">adk</name>
    <name type="ordered locus">Cag_0827</name>
</gene>
<reference key="1">
    <citation type="submission" date="2005-08" db="EMBL/GenBank/DDBJ databases">
        <title>Complete sequence of Chlorobium chlorochromatii CaD3.</title>
        <authorList>
            <consortium name="US DOE Joint Genome Institute"/>
            <person name="Copeland A."/>
            <person name="Lucas S."/>
            <person name="Lapidus A."/>
            <person name="Barry K."/>
            <person name="Detter J.C."/>
            <person name="Glavina T."/>
            <person name="Hammon N."/>
            <person name="Israni S."/>
            <person name="Pitluck S."/>
            <person name="Bryant D."/>
            <person name="Schmutz J."/>
            <person name="Larimer F."/>
            <person name="Land M."/>
            <person name="Kyrpides N."/>
            <person name="Ivanova N."/>
            <person name="Richardson P."/>
        </authorList>
    </citation>
    <scope>NUCLEOTIDE SEQUENCE [LARGE SCALE GENOMIC DNA]</scope>
    <source>
        <strain>CaD3</strain>
    </source>
</reference>
<feature type="chain" id="PRO_1000021715" description="Adenylate kinase">
    <location>
        <begin position="1"/>
        <end position="218"/>
    </location>
</feature>
<feature type="region of interest" description="NMP" evidence="1">
    <location>
        <begin position="30"/>
        <end position="59"/>
    </location>
</feature>
<feature type="region of interest" description="LID" evidence="1">
    <location>
        <begin position="122"/>
        <end position="159"/>
    </location>
</feature>
<feature type="binding site" evidence="1">
    <location>
        <begin position="10"/>
        <end position="15"/>
    </location>
    <ligand>
        <name>ATP</name>
        <dbReference type="ChEBI" id="CHEBI:30616"/>
    </ligand>
</feature>
<feature type="binding site" evidence="1">
    <location>
        <position position="31"/>
    </location>
    <ligand>
        <name>AMP</name>
        <dbReference type="ChEBI" id="CHEBI:456215"/>
    </ligand>
</feature>
<feature type="binding site" evidence="1">
    <location>
        <position position="36"/>
    </location>
    <ligand>
        <name>AMP</name>
        <dbReference type="ChEBI" id="CHEBI:456215"/>
    </ligand>
</feature>
<feature type="binding site" evidence="1">
    <location>
        <begin position="57"/>
        <end position="59"/>
    </location>
    <ligand>
        <name>AMP</name>
        <dbReference type="ChEBI" id="CHEBI:456215"/>
    </ligand>
</feature>
<feature type="binding site" evidence="1">
    <location>
        <begin position="85"/>
        <end position="88"/>
    </location>
    <ligand>
        <name>AMP</name>
        <dbReference type="ChEBI" id="CHEBI:456215"/>
    </ligand>
</feature>
<feature type="binding site" evidence="1">
    <location>
        <position position="92"/>
    </location>
    <ligand>
        <name>AMP</name>
        <dbReference type="ChEBI" id="CHEBI:456215"/>
    </ligand>
</feature>
<feature type="binding site" evidence="1">
    <location>
        <position position="123"/>
    </location>
    <ligand>
        <name>ATP</name>
        <dbReference type="ChEBI" id="CHEBI:30616"/>
    </ligand>
</feature>
<feature type="binding site" evidence="1">
    <location>
        <begin position="132"/>
        <end position="133"/>
    </location>
    <ligand>
        <name>ATP</name>
        <dbReference type="ChEBI" id="CHEBI:30616"/>
    </ligand>
</feature>
<feature type="binding site" evidence="1">
    <location>
        <position position="156"/>
    </location>
    <ligand>
        <name>AMP</name>
        <dbReference type="ChEBI" id="CHEBI:456215"/>
    </ligand>
</feature>
<feature type="binding site" evidence="1">
    <location>
        <position position="167"/>
    </location>
    <ligand>
        <name>AMP</name>
        <dbReference type="ChEBI" id="CHEBI:456215"/>
    </ligand>
</feature>
<feature type="binding site" evidence="1">
    <location>
        <position position="203"/>
    </location>
    <ligand>
        <name>ATP</name>
        <dbReference type="ChEBI" id="CHEBI:30616"/>
    </ligand>
</feature>
<name>KAD_CHLCH</name>
<protein>
    <recommendedName>
        <fullName evidence="1">Adenylate kinase</fullName>
        <shortName evidence="1">AK</shortName>
        <ecNumber evidence="1">2.7.4.3</ecNumber>
    </recommendedName>
    <alternativeName>
        <fullName evidence="1">ATP-AMP transphosphorylase</fullName>
    </alternativeName>
    <alternativeName>
        <fullName evidence="1">ATP:AMP phosphotransferase</fullName>
    </alternativeName>
    <alternativeName>
        <fullName evidence="1">Adenylate monophosphate kinase</fullName>
    </alternativeName>
</protein>
<evidence type="ECO:0000255" key="1">
    <source>
        <dbReference type="HAMAP-Rule" id="MF_00235"/>
    </source>
</evidence>
<comment type="function">
    <text evidence="1">Catalyzes the reversible transfer of the terminal phosphate group between ATP and AMP. Plays an important role in cellular energy homeostasis and in adenine nucleotide metabolism.</text>
</comment>
<comment type="catalytic activity">
    <reaction evidence="1">
        <text>AMP + ATP = 2 ADP</text>
        <dbReference type="Rhea" id="RHEA:12973"/>
        <dbReference type="ChEBI" id="CHEBI:30616"/>
        <dbReference type="ChEBI" id="CHEBI:456215"/>
        <dbReference type="ChEBI" id="CHEBI:456216"/>
        <dbReference type="EC" id="2.7.4.3"/>
    </reaction>
</comment>
<comment type="pathway">
    <text evidence="1">Purine metabolism; AMP biosynthesis via salvage pathway; AMP from ADP: step 1/1.</text>
</comment>
<comment type="subunit">
    <text evidence="1">Monomer.</text>
</comment>
<comment type="subcellular location">
    <subcellularLocation>
        <location evidence="1">Cytoplasm</location>
    </subcellularLocation>
</comment>
<comment type="domain">
    <text evidence="1">Consists of three domains, a large central CORE domain and two small peripheral domains, NMPbind and LID, which undergo movements during catalysis. The LID domain closes over the site of phosphoryl transfer upon ATP binding. Assembling and dissambling the active center during each catalytic cycle provides an effective means to prevent ATP hydrolysis.</text>
</comment>
<comment type="similarity">
    <text evidence="1">Belongs to the adenylate kinase family.</text>
</comment>
<accession>Q3ASD2</accession>